<gene>
    <name evidence="1" type="primary">purA</name>
    <name type="ordered locus">Dvul_0183</name>
</gene>
<sequence length="426" mass="46287">MSNVVVMGAQWGDEGKGKIVDLLTRESDVIVRFQGGNNAGHTVLVGEKQYILHLIPSGILHEGKKCLIGNGVVLDPEVFCREIDSLRAQGVDMSPARLMISRKTHLIMPYHKVLDQAREAHKCKDAKIGTTGRGIGPCYEDKSARIGVRAADLAMPELLRSKIEAALVEKNALFTGLYGQQPLDADAVFEEVMAHGAKLVPYLADVSSEIHDAWAEGRSVLFEGAQGTHLDIDHGTYPFVTSSNTVSGNAAAGSGVPPTKLDRIIAIVKAYTTRVGAGPFPTELDDATGEYLQQKGHEFGATTGRKRRCGWLDAVVLRESVRLNGPTDIALTKLDVLSGLKEISICTAYTYRGEQVAYPPQEQNGMAHVTPVYETMPGWDDDITGCTTWESLPAPVKAYVLRIEEITGVRISLVSVGPERDQTIRR</sequence>
<proteinExistence type="inferred from homology"/>
<dbReference type="EC" id="6.3.4.4" evidence="1"/>
<dbReference type="EMBL" id="CP000527">
    <property type="protein sequence ID" value="ABM27207.1"/>
    <property type="status" value="ALT_INIT"/>
    <property type="molecule type" value="Genomic_DNA"/>
</dbReference>
<dbReference type="RefSeq" id="WP_043629095.1">
    <property type="nucleotide sequence ID" value="NC_008751.1"/>
</dbReference>
<dbReference type="SMR" id="A1V9U1"/>
<dbReference type="KEGG" id="dvl:Dvul_0183"/>
<dbReference type="HOGENOM" id="CLU_029848_0_0_7"/>
<dbReference type="UniPathway" id="UPA00075">
    <property type="reaction ID" value="UER00335"/>
</dbReference>
<dbReference type="Proteomes" id="UP000009173">
    <property type="component" value="Chromosome"/>
</dbReference>
<dbReference type="GO" id="GO:0005737">
    <property type="term" value="C:cytoplasm"/>
    <property type="evidence" value="ECO:0007669"/>
    <property type="project" value="UniProtKB-SubCell"/>
</dbReference>
<dbReference type="GO" id="GO:0004019">
    <property type="term" value="F:adenylosuccinate synthase activity"/>
    <property type="evidence" value="ECO:0007669"/>
    <property type="project" value="UniProtKB-UniRule"/>
</dbReference>
<dbReference type="GO" id="GO:0005525">
    <property type="term" value="F:GTP binding"/>
    <property type="evidence" value="ECO:0007669"/>
    <property type="project" value="UniProtKB-UniRule"/>
</dbReference>
<dbReference type="GO" id="GO:0000287">
    <property type="term" value="F:magnesium ion binding"/>
    <property type="evidence" value="ECO:0007669"/>
    <property type="project" value="UniProtKB-UniRule"/>
</dbReference>
<dbReference type="GO" id="GO:0044208">
    <property type="term" value="P:'de novo' AMP biosynthetic process"/>
    <property type="evidence" value="ECO:0007669"/>
    <property type="project" value="UniProtKB-UniRule"/>
</dbReference>
<dbReference type="GO" id="GO:0046040">
    <property type="term" value="P:IMP metabolic process"/>
    <property type="evidence" value="ECO:0007669"/>
    <property type="project" value="TreeGrafter"/>
</dbReference>
<dbReference type="CDD" id="cd03108">
    <property type="entry name" value="AdSS"/>
    <property type="match status" value="1"/>
</dbReference>
<dbReference type="FunFam" id="1.10.300.10:FF:000001">
    <property type="entry name" value="Adenylosuccinate synthetase"/>
    <property type="match status" value="1"/>
</dbReference>
<dbReference type="FunFam" id="3.90.170.10:FF:000001">
    <property type="entry name" value="Adenylosuccinate synthetase"/>
    <property type="match status" value="1"/>
</dbReference>
<dbReference type="Gene3D" id="3.40.440.10">
    <property type="entry name" value="Adenylosuccinate Synthetase, subunit A, domain 1"/>
    <property type="match status" value="1"/>
</dbReference>
<dbReference type="Gene3D" id="1.10.300.10">
    <property type="entry name" value="Adenylosuccinate Synthetase, subunit A, domain 2"/>
    <property type="match status" value="1"/>
</dbReference>
<dbReference type="Gene3D" id="3.90.170.10">
    <property type="entry name" value="Adenylosuccinate Synthetase, subunit A, domain 3"/>
    <property type="match status" value="1"/>
</dbReference>
<dbReference type="HAMAP" id="MF_00011">
    <property type="entry name" value="Adenylosucc_synth"/>
    <property type="match status" value="1"/>
</dbReference>
<dbReference type="InterPro" id="IPR018220">
    <property type="entry name" value="Adenylosuccin_syn_GTP-bd"/>
</dbReference>
<dbReference type="InterPro" id="IPR033128">
    <property type="entry name" value="Adenylosuccin_syn_Lys_AS"/>
</dbReference>
<dbReference type="InterPro" id="IPR042109">
    <property type="entry name" value="Adenylosuccinate_synth_dom1"/>
</dbReference>
<dbReference type="InterPro" id="IPR042110">
    <property type="entry name" value="Adenylosuccinate_synth_dom2"/>
</dbReference>
<dbReference type="InterPro" id="IPR042111">
    <property type="entry name" value="Adenylosuccinate_synth_dom3"/>
</dbReference>
<dbReference type="InterPro" id="IPR001114">
    <property type="entry name" value="Adenylosuccinate_synthetase"/>
</dbReference>
<dbReference type="InterPro" id="IPR027417">
    <property type="entry name" value="P-loop_NTPase"/>
</dbReference>
<dbReference type="NCBIfam" id="NF002223">
    <property type="entry name" value="PRK01117.1"/>
    <property type="match status" value="1"/>
</dbReference>
<dbReference type="NCBIfam" id="TIGR00184">
    <property type="entry name" value="purA"/>
    <property type="match status" value="1"/>
</dbReference>
<dbReference type="PANTHER" id="PTHR11846">
    <property type="entry name" value="ADENYLOSUCCINATE SYNTHETASE"/>
    <property type="match status" value="1"/>
</dbReference>
<dbReference type="PANTHER" id="PTHR11846:SF0">
    <property type="entry name" value="ADENYLOSUCCINATE SYNTHETASE"/>
    <property type="match status" value="1"/>
</dbReference>
<dbReference type="Pfam" id="PF00709">
    <property type="entry name" value="Adenylsucc_synt"/>
    <property type="match status" value="1"/>
</dbReference>
<dbReference type="SMART" id="SM00788">
    <property type="entry name" value="Adenylsucc_synt"/>
    <property type="match status" value="1"/>
</dbReference>
<dbReference type="SUPFAM" id="SSF52540">
    <property type="entry name" value="P-loop containing nucleoside triphosphate hydrolases"/>
    <property type="match status" value="1"/>
</dbReference>
<dbReference type="PROSITE" id="PS01266">
    <property type="entry name" value="ADENYLOSUCCIN_SYN_1"/>
    <property type="match status" value="1"/>
</dbReference>
<dbReference type="PROSITE" id="PS00513">
    <property type="entry name" value="ADENYLOSUCCIN_SYN_2"/>
    <property type="match status" value="1"/>
</dbReference>
<feature type="chain" id="PRO_0000321797" description="Adenylosuccinate synthetase">
    <location>
        <begin position="1"/>
        <end position="426"/>
    </location>
</feature>
<feature type="active site" description="Proton acceptor" evidence="1">
    <location>
        <position position="13"/>
    </location>
</feature>
<feature type="active site" description="Proton donor" evidence="1">
    <location>
        <position position="41"/>
    </location>
</feature>
<feature type="binding site" evidence="1">
    <location>
        <begin position="12"/>
        <end position="18"/>
    </location>
    <ligand>
        <name>GTP</name>
        <dbReference type="ChEBI" id="CHEBI:37565"/>
    </ligand>
</feature>
<feature type="binding site" description="in other chain" evidence="1">
    <location>
        <begin position="13"/>
        <end position="16"/>
    </location>
    <ligand>
        <name>IMP</name>
        <dbReference type="ChEBI" id="CHEBI:58053"/>
        <note>ligand shared between dimeric partners</note>
    </ligand>
</feature>
<feature type="binding site" evidence="1">
    <location>
        <position position="13"/>
    </location>
    <ligand>
        <name>Mg(2+)</name>
        <dbReference type="ChEBI" id="CHEBI:18420"/>
    </ligand>
</feature>
<feature type="binding site" description="in other chain" evidence="1">
    <location>
        <begin position="38"/>
        <end position="41"/>
    </location>
    <ligand>
        <name>IMP</name>
        <dbReference type="ChEBI" id="CHEBI:58053"/>
        <note>ligand shared between dimeric partners</note>
    </ligand>
</feature>
<feature type="binding site" evidence="1">
    <location>
        <begin position="40"/>
        <end position="42"/>
    </location>
    <ligand>
        <name>GTP</name>
        <dbReference type="ChEBI" id="CHEBI:37565"/>
    </ligand>
</feature>
<feature type="binding site" evidence="1">
    <location>
        <position position="40"/>
    </location>
    <ligand>
        <name>Mg(2+)</name>
        <dbReference type="ChEBI" id="CHEBI:18420"/>
    </ligand>
</feature>
<feature type="binding site" description="in other chain" evidence="1">
    <location>
        <position position="131"/>
    </location>
    <ligand>
        <name>IMP</name>
        <dbReference type="ChEBI" id="CHEBI:58053"/>
        <note>ligand shared between dimeric partners</note>
    </ligand>
</feature>
<feature type="binding site" evidence="1">
    <location>
        <position position="145"/>
    </location>
    <ligand>
        <name>IMP</name>
        <dbReference type="ChEBI" id="CHEBI:58053"/>
        <note>ligand shared between dimeric partners</note>
    </ligand>
</feature>
<feature type="binding site" description="in other chain" evidence="1">
    <location>
        <position position="226"/>
    </location>
    <ligand>
        <name>IMP</name>
        <dbReference type="ChEBI" id="CHEBI:58053"/>
        <note>ligand shared between dimeric partners</note>
    </ligand>
</feature>
<feature type="binding site" description="in other chain" evidence="1">
    <location>
        <position position="241"/>
    </location>
    <ligand>
        <name>IMP</name>
        <dbReference type="ChEBI" id="CHEBI:58053"/>
        <note>ligand shared between dimeric partners</note>
    </ligand>
</feature>
<feature type="binding site" evidence="1">
    <location>
        <begin position="301"/>
        <end position="307"/>
    </location>
    <ligand>
        <name>substrate</name>
    </ligand>
</feature>
<feature type="binding site" description="in other chain" evidence="1">
    <location>
        <position position="305"/>
    </location>
    <ligand>
        <name>IMP</name>
        <dbReference type="ChEBI" id="CHEBI:58053"/>
        <note>ligand shared between dimeric partners</note>
    </ligand>
</feature>
<feature type="binding site" evidence="1">
    <location>
        <position position="307"/>
    </location>
    <ligand>
        <name>GTP</name>
        <dbReference type="ChEBI" id="CHEBI:37565"/>
    </ligand>
</feature>
<feature type="binding site" evidence="1">
    <location>
        <begin position="333"/>
        <end position="335"/>
    </location>
    <ligand>
        <name>GTP</name>
        <dbReference type="ChEBI" id="CHEBI:37565"/>
    </ligand>
</feature>
<feature type="binding site" evidence="1">
    <location>
        <begin position="415"/>
        <end position="417"/>
    </location>
    <ligand>
        <name>GTP</name>
        <dbReference type="ChEBI" id="CHEBI:37565"/>
    </ligand>
</feature>
<evidence type="ECO:0000255" key="1">
    <source>
        <dbReference type="HAMAP-Rule" id="MF_00011"/>
    </source>
</evidence>
<evidence type="ECO:0000305" key="2"/>
<comment type="function">
    <text evidence="1">Plays an important role in the de novo pathway of purine nucleotide biosynthesis. Catalyzes the first committed step in the biosynthesis of AMP from IMP.</text>
</comment>
<comment type="catalytic activity">
    <reaction evidence="1">
        <text>IMP + L-aspartate + GTP = N(6)-(1,2-dicarboxyethyl)-AMP + GDP + phosphate + 2 H(+)</text>
        <dbReference type="Rhea" id="RHEA:15753"/>
        <dbReference type="ChEBI" id="CHEBI:15378"/>
        <dbReference type="ChEBI" id="CHEBI:29991"/>
        <dbReference type="ChEBI" id="CHEBI:37565"/>
        <dbReference type="ChEBI" id="CHEBI:43474"/>
        <dbReference type="ChEBI" id="CHEBI:57567"/>
        <dbReference type="ChEBI" id="CHEBI:58053"/>
        <dbReference type="ChEBI" id="CHEBI:58189"/>
        <dbReference type="EC" id="6.3.4.4"/>
    </reaction>
</comment>
<comment type="cofactor">
    <cofactor evidence="1">
        <name>Mg(2+)</name>
        <dbReference type="ChEBI" id="CHEBI:18420"/>
    </cofactor>
    <text evidence="1">Binds 1 Mg(2+) ion per subunit.</text>
</comment>
<comment type="pathway">
    <text evidence="1">Purine metabolism; AMP biosynthesis via de novo pathway; AMP from IMP: step 1/2.</text>
</comment>
<comment type="subunit">
    <text evidence="1">Homodimer.</text>
</comment>
<comment type="subcellular location">
    <subcellularLocation>
        <location evidence="1">Cytoplasm</location>
    </subcellularLocation>
</comment>
<comment type="similarity">
    <text evidence="1">Belongs to the adenylosuccinate synthetase family.</text>
</comment>
<comment type="sequence caution" evidence="2">
    <conflict type="erroneous initiation">
        <sequence resource="EMBL-CDS" id="ABM27207"/>
    </conflict>
</comment>
<keyword id="KW-0963">Cytoplasm</keyword>
<keyword id="KW-0342">GTP-binding</keyword>
<keyword id="KW-0436">Ligase</keyword>
<keyword id="KW-0460">Magnesium</keyword>
<keyword id="KW-0479">Metal-binding</keyword>
<keyword id="KW-0547">Nucleotide-binding</keyword>
<keyword id="KW-0658">Purine biosynthesis</keyword>
<name>PURA_NITV4</name>
<organism>
    <name type="scientific">Nitratidesulfovibrio vulgaris (strain DP4)</name>
    <name type="common">Desulfovibrio vulgaris</name>
    <dbReference type="NCBI Taxonomy" id="391774"/>
    <lineage>
        <taxon>Bacteria</taxon>
        <taxon>Pseudomonadati</taxon>
        <taxon>Thermodesulfobacteriota</taxon>
        <taxon>Desulfovibrionia</taxon>
        <taxon>Desulfovibrionales</taxon>
        <taxon>Desulfovibrionaceae</taxon>
        <taxon>Nitratidesulfovibrio</taxon>
    </lineage>
</organism>
<accession>A1V9U1</accession>
<protein>
    <recommendedName>
        <fullName evidence="1">Adenylosuccinate synthetase</fullName>
        <shortName evidence="1">AMPSase</shortName>
        <shortName evidence="1">AdSS</shortName>
        <ecNumber evidence="1">6.3.4.4</ecNumber>
    </recommendedName>
    <alternativeName>
        <fullName evidence="1">IMP--aspartate ligase</fullName>
    </alternativeName>
</protein>
<reference key="1">
    <citation type="journal article" date="2009" name="Environ. Microbiol.">
        <title>Contribution of mobile genetic elements to Desulfovibrio vulgaris genome plasticity.</title>
        <authorList>
            <person name="Walker C.B."/>
            <person name="Stolyar S."/>
            <person name="Chivian D."/>
            <person name="Pinel N."/>
            <person name="Gabster J.A."/>
            <person name="Dehal P.S."/>
            <person name="He Z."/>
            <person name="Yang Z.K."/>
            <person name="Yen H.C."/>
            <person name="Zhou J."/>
            <person name="Wall J.D."/>
            <person name="Hazen T.C."/>
            <person name="Arkin A.P."/>
            <person name="Stahl D.A."/>
        </authorList>
    </citation>
    <scope>NUCLEOTIDE SEQUENCE [LARGE SCALE GENOMIC DNA]</scope>
    <source>
        <strain>DP4</strain>
    </source>
</reference>